<reference key="1">
    <citation type="journal article" date="2008" name="J. Bacteriol.">
        <title>The complete genome sequence of Escherichia coli DH10B: insights into the biology of a laboratory workhorse.</title>
        <authorList>
            <person name="Durfee T."/>
            <person name="Nelson R."/>
            <person name="Baldwin S."/>
            <person name="Plunkett G. III"/>
            <person name="Burland V."/>
            <person name="Mau B."/>
            <person name="Petrosino J.F."/>
            <person name="Qin X."/>
            <person name="Muzny D.M."/>
            <person name="Ayele M."/>
            <person name="Gibbs R.A."/>
            <person name="Csorgo B."/>
            <person name="Posfai G."/>
            <person name="Weinstock G.M."/>
            <person name="Blattner F.R."/>
        </authorList>
    </citation>
    <scope>NUCLEOTIDE SEQUENCE [LARGE SCALE GENOMIC DNA]</scope>
    <source>
        <strain>K12 / DH10B</strain>
    </source>
</reference>
<name>IDI_ECODH</name>
<proteinExistence type="inferred from homology"/>
<comment type="function">
    <text evidence="1">Catalyzes the 1,3-allylic rearrangement of the homoallylic substrate isopentenyl (IPP) to its highly electrophilic allylic isomer, dimethylallyl diphosphate (DMAPP).</text>
</comment>
<comment type="catalytic activity">
    <reaction evidence="1">
        <text>isopentenyl diphosphate = dimethylallyl diphosphate</text>
        <dbReference type="Rhea" id="RHEA:23284"/>
        <dbReference type="ChEBI" id="CHEBI:57623"/>
        <dbReference type="ChEBI" id="CHEBI:128769"/>
        <dbReference type="EC" id="5.3.3.2"/>
    </reaction>
</comment>
<comment type="cofactor">
    <cofactor evidence="1">
        <name>Mg(2+)</name>
        <dbReference type="ChEBI" id="CHEBI:18420"/>
    </cofactor>
    <text evidence="1">Binds 1 Mg(2+) ion per subunit. The magnesium ion binds only when substrate is bound.</text>
</comment>
<comment type="cofactor">
    <cofactor evidence="1">
        <name>Mn(2+)</name>
        <dbReference type="ChEBI" id="CHEBI:29035"/>
    </cofactor>
    <text evidence="1">Binds 1 Mn(2+) ion per subunit.</text>
</comment>
<comment type="pathway">
    <text evidence="1">Isoprenoid biosynthesis; dimethylallyl diphosphate biosynthesis; dimethylallyl diphosphate from isopentenyl diphosphate: step 1/1.</text>
</comment>
<comment type="subunit">
    <text evidence="1">Homodimer.</text>
</comment>
<comment type="subcellular location">
    <subcellularLocation>
        <location evidence="1">Cytoplasm</location>
    </subcellularLocation>
</comment>
<comment type="similarity">
    <text evidence="1">Belongs to the IPP isomerase type 1 family.</text>
</comment>
<evidence type="ECO:0000255" key="1">
    <source>
        <dbReference type="HAMAP-Rule" id="MF_00202"/>
    </source>
</evidence>
<feature type="chain" id="PRO_1000099437" description="Isopentenyl-diphosphate Delta-isomerase">
    <location>
        <begin position="1"/>
        <end position="182"/>
    </location>
</feature>
<feature type="domain" description="Nudix hydrolase">
    <location>
        <begin position="30"/>
        <end position="164"/>
    </location>
</feature>
<feature type="active site" evidence="1">
    <location>
        <position position="67"/>
    </location>
</feature>
<feature type="active site" evidence="1">
    <location>
        <position position="116"/>
    </location>
</feature>
<feature type="binding site" evidence="1">
    <location>
        <position position="25"/>
    </location>
    <ligand>
        <name>Mn(2+)</name>
        <dbReference type="ChEBI" id="CHEBI:29035"/>
    </ligand>
</feature>
<feature type="binding site" evidence="1">
    <location>
        <position position="32"/>
    </location>
    <ligand>
        <name>Mn(2+)</name>
        <dbReference type="ChEBI" id="CHEBI:29035"/>
    </ligand>
</feature>
<feature type="binding site" evidence="1">
    <location>
        <position position="69"/>
    </location>
    <ligand>
        <name>Mn(2+)</name>
        <dbReference type="ChEBI" id="CHEBI:29035"/>
    </ligand>
</feature>
<feature type="binding site" evidence="1">
    <location>
        <position position="87"/>
    </location>
    <ligand>
        <name>Mg(2+)</name>
        <dbReference type="ChEBI" id="CHEBI:18420"/>
    </ligand>
</feature>
<feature type="binding site" evidence="1">
    <location>
        <position position="114"/>
    </location>
    <ligand>
        <name>Mn(2+)</name>
        <dbReference type="ChEBI" id="CHEBI:29035"/>
    </ligand>
</feature>
<feature type="binding site" evidence="1">
    <location>
        <position position="116"/>
    </location>
    <ligand>
        <name>Mn(2+)</name>
        <dbReference type="ChEBI" id="CHEBI:29035"/>
    </ligand>
</feature>
<dbReference type="EC" id="5.3.3.2" evidence="1"/>
<dbReference type="EMBL" id="CP000948">
    <property type="protein sequence ID" value="ACB03992.1"/>
    <property type="molecule type" value="Genomic_DNA"/>
</dbReference>
<dbReference type="RefSeq" id="WP_001192820.1">
    <property type="nucleotide sequence ID" value="NC_010473.1"/>
</dbReference>
<dbReference type="SMR" id="B1XEH6"/>
<dbReference type="KEGG" id="ecd:ECDH10B_3063"/>
<dbReference type="HOGENOM" id="CLU_060552_2_0_6"/>
<dbReference type="UniPathway" id="UPA00059">
    <property type="reaction ID" value="UER00104"/>
</dbReference>
<dbReference type="GO" id="GO:0005737">
    <property type="term" value="C:cytoplasm"/>
    <property type="evidence" value="ECO:0007669"/>
    <property type="project" value="UniProtKB-SubCell"/>
</dbReference>
<dbReference type="GO" id="GO:0004452">
    <property type="term" value="F:isopentenyl-diphosphate delta-isomerase activity"/>
    <property type="evidence" value="ECO:0007669"/>
    <property type="project" value="UniProtKB-UniRule"/>
</dbReference>
<dbReference type="GO" id="GO:0046872">
    <property type="term" value="F:metal ion binding"/>
    <property type="evidence" value="ECO:0007669"/>
    <property type="project" value="UniProtKB-KW"/>
</dbReference>
<dbReference type="GO" id="GO:0050992">
    <property type="term" value="P:dimethylallyl diphosphate biosynthetic process"/>
    <property type="evidence" value="ECO:0007669"/>
    <property type="project" value="UniProtKB-UniRule"/>
</dbReference>
<dbReference type="GO" id="GO:0008299">
    <property type="term" value="P:isoprenoid biosynthetic process"/>
    <property type="evidence" value="ECO:0007669"/>
    <property type="project" value="UniProtKB-KW"/>
</dbReference>
<dbReference type="CDD" id="cd02885">
    <property type="entry name" value="NUDIX_IPP_Isomerase"/>
    <property type="match status" value="1"/>
</dbReference>
<dbReference type="FunFam" id="3.90.79.10:FF:000009">
    <property type="entry name" value="Isopentenyl-diphosphate Delta-isomerase"/>
    <property type="match status" value="1"/>
</dbReference>
<dbReference type="Gene3D" id="3.90.79.10">
    <property type="entry name" value="Nucleoside Triphosphate Pyrophosphohydrolase"/>
    <property type="match status" value="1"/>
</dbReference>
<dbReference type="HAMAP" id="MF_00202">
    <property type="entry name" value="Idi"/>
    <property type="match status" value="1"/>
</dbReference>
<dbReference type="InterPro" id="IPR056375">
    <property type="entry name" value="Idi_bact"/>
</dbReference>
<dbReference type="InterPro" id="IPR011876">
    <property type="entry name" value="IsopentenylPP_isomerase_typ1"/>
</dbReference>
<dbReference type="InterPro" id="IPR015797">
    <property type="entry name" value="NUDIX_hydrolase-like_dom_sf"/>
</dbReference>
<dbReference type="InterPro" id="IPR000086">
    <property type="entry name" value="NUDIX_hydrolase_dom"/>
</dbReference>
<dbReference type="NCBIfam" id="TIGR02150">
    <property type="entry name" value="IPP_isom_1"/>
    <property type="match status" value="1"/>
</dbReference>
<dbReference type="NCBIfam" id="NF002995">
    <property type="entry name" value="PRK03759.1"/>
    <property type="match status" value="1"/>
</dbReference>
<dbReference type="PANTHER" id="PTHR10885">
    <property type="entry name" value="ISOPENTENYL-DIPHOSPHATE DELTA-ISOMERASE"/>
    <property type="match status" value="1"/>
</dbReference>
<dbReference type="PANTHER" id="PTHR10885:SF0">
    <property type="entry name" value="ISOPENTENYL-DIPHOSPHATE DELTA-ISOMERASE"/>
    <property type="match status" value="1"/>
</dbReference>
<dbReference type="Pfam" id="PF00293">
    <property type="entry name" value="NUDIX"/>
    <property type="match status" value="1"/>
</dbReference>
<dbReference type="PIRSF" id="PIRSF018427">
    <property type="entry name" value="Isopntndiph_ism"/>
    <property type="match status" value="1"/>
</dbReference>
<dbReference type="SUPFAM" id="SSF55811">
    <property type="entry name" value="Nudix"/>
    <property type="match status" value="1"/>
</dbReference>
<dbReference type="PROSITE" id="PS51462">
    <property type="entry name" value="NUDIX"/>
    <property type="match status" value="1"/>
</dbReference>
<protein>
    <recommendedName>
        <fullName evidence="1">Isopentenyl-diphosphate Delta-isomerase</fullName>
        <shortName evidence="1">IPP isomerase</shortName>
        <ecNumber evidence="1">5.3.3.2</ecNumber>
    </recommendedName>
    <alternativeName>
        <fullName evidence="1">IPP:DMAPP isomerase</fullName>
    </alternativeName>
    <alternativeName>
        <fullName evidence="1">Isopentenyl pyrophosphate isomerase</fullName>
    </alternativeName>
</protein>
<keyword id="KW-0963">Cytoplasm</keyword>
<keyword id="KW-0413">Isomerase</keyword>
<keyword id="KW-0414">Isoprene biosynthesis</keyword>
<keyword id="KW-0460">Magnesium</keyword>
<keyword id="KW-0464">Manganese</keyword>
<keyword id="KW-0479">Metal-binding</keyword>
<sequence>MQTEHVILLNAQGVPTGTLEKYAAHTADTRLHLAFSSWLFNAKGQLLVTRRALSKKAWPGVWTNSVCGHPQLGESNEDAVIRRCRYELGVEITPPESIYPDFRYRATDPSGIVENEVCPVFAARTTSALQINDDEVMDYQWCDLADVLHGIDATPWAFSPWMVMQATNREARKRLSAFTQLK</sequence>
<organism>
    <name type="scientific">Escherichia coli (strain K12 / DH10B)</name>
    <dbReference type="NCBI Taxonomy" id="316385"/>
    <lineage>
        <taxon>Bacteria</taxon>
        <taxon>Pseudomonadati</taxon>
        <taxon>Pseudomonadota</taxon>
        <taxon>Gammaproteobacteria</taxon>
        <taxon>Enterobacterales</taxon>
        <taxon>Enterobacteriaceae</taxon>
        <taxon>Escherichia</taxon>
    </lineage>
</organism>
<gene>
    <name evidence="1" type="primary">idi</name>
    <name type="ordered locus">ECDH10B_3063</name>
</gene>
<accession>B1XEH6</accession>